<reference key="1">
    <citation type="journal article" date="2010" name="J. Bacteriol.">
        <title>Genome sequence of the Fleming strain of Micrococcus luteus, a simple free-living actinobacterium.</title>
        <authorList>
            <person name="Young M."/>
            <person name="Artsatbanov V."/>
            <person name="Beller H.R."/>
            <person name="Chandra G."/>
            <person name="Chater K.F."/>
            <person name="Dover L.G."/>
            <person name="Goh E.B."/>
            <person name="Kahan T."/>
            <person name="Kaprelyants A.S."/>
            <person name="Kyrpides N."/>
            <person name="Lapidus A."/>
            <person name="Lowry S.R."/>
            <person name="Lykidis A."/>
            <person name="Mahillon J."/>
            <person name="Markowitz V."/>
            <person name="Mavromatis K."/>
            <person name="Mukamolova G.V."/>
            <person name="Oren A."/>
            <person name="Rokem J.S."/>
            <person name="Smith M.C."/>
            <person name="Young D.I."/>
            <person name="Greenblatt C.L."/>
        </authorList>
    </citation>
    <scope>NUCLEOTIDE SEQUENCE [LARGE SCALE GENOMIC DNA]</scope>
    <source>
        <strain>ATCC 4698 / DSM 20030 / JCM 1464 / CCM 169 / CCUG 5858 / IAM 1056 / NBRC 3333 / NCIMB 9278 / NCTC 2665 / VKM Ac-2230</strain>
    </source>
</reference>
<comment type="subunit">
    <text evidence="1">Part of the 50S ribosomal subunit.</text>
</comment>
<comment type="similarity">
    <text evidence="1">Belongs to the bacterial ribosomal protein bL31 family. Type B subfamily.</text>
</comment>
<accession>C5CBS3</accession>
<protein>
    <recommendedName>
        <fullName evidence="1">Large ribosomal subunit protein bL31B</fullName>
    </recommendedName>
    <alternativeName>
        <fullName evidence="2">50S ribosomal protein L31 type B</fullName>
    </alternativeName>
</protein>
<proteinExistence type="inferred from homology"/>
<dbReference type="EMBL" id="CP001628">
    <property type="protein sequence ID" value="ACS30670.1"/>
    <property type="molecule type" value="Genomic_DNA"/>
</dbReference>
<dbReference type="RefSeq" id="WP_010078690.1">
    <property type="nucleotide sequence ID" value="NC_012803.1"/>
</dbReference>
<dbReference type="SMR" id="C5CBS3"/>
<dbReference type="STRING" id="465515.Mlut_11640"/>
<dbReference type="EnsemblBacteria" id="ACS30670">
    <property type="protein sequence ID" value="ACS30670"/>
    <property type="gene ID" value="Mlut_11640"/>
</dbReference>
<dbReference type="GeneID" id="93345321"/>
<dbReference type="KEGG" id="mlu:Mlut_11640"/>
<dbReference type="PATRIC" id="fig|465515.4.peg.1106"/>
<dbReference type="eggNOG" id="COG0254">
    <property type="taxonomic scope" value="Bacteria"/>
</dbReference>
<dbReference type="HOGENOM" id="CLU_114306_2_2_11"/>
<dbReference type="Proteomes" id="UP000000738">
    <property type="component" value="Chromosome"/>
</dbReference>
<dbReference type="GO" id="GO:1990904">
    <property type="term" value="C:ribonucleoprotein complex"/>
    <property type="evidence" value="ECO:0007669"/>
    <property type="project" value="UniProtKB-KW"/>
</dbReference>
<dbReference type="GO" id="GO:0005840">
    <property type="term" value="C:ribosome"/>
    <property type="evidence" value="ECO:0007669"/>
    <property type="project" value="UniProtKB-KW"/>
</dbReference>
<dbReference type="GO" id="GO:0003735">
    <property type="term" value="F:structural constituent of ribosome"/>
    <property type="evidence" value="ECO:0007669"/>
    <property type="project" value="InterPro"/>
</dbReference>
<dbReference type="GO" id="GO:0006412">
    <property type="term" value="P:translation"/>
    <property type="evidence" value="ECO:0007669"/>
    <property type="project" value="UniProtKB-UniRule"/>
</dbReference>
<dbReference type="Gene3D" id="4.10.830.30">
    <property type="entry name" value="Ribosomal protein L31"/>
    <property type="match status" value="1"/>
</dbReference>
<dbReference type="HAMAP" id="MF_00502">
    <property type="entry name" value="Ribosomal_bL31_2"/>
    <property type="match status" value="1"/>
</dbReference>
<dbReference type="InterPro" id="IPR034704">
    <property type="entry name" value="Ribosomal_bL28/bL31-like_sf"/>
</dbReference>
<dbReference type="InterPro" id="IPR002150">
    <property type="entry name" value="Ribosomal_bL31"/>
</dbReference>
<dbReference type="InterPro" id="IPR027493">
    <property type="entry name" value="Ribosomal_bL31_B"/>
</dbReference>
<dbReference type="InterPro" id="IPR042105">
    <property type="entry name" value="Ribosomal_bL31_sf"/>
</dbReference>
<dbReference type="NCBIfam" id="TIGR00105">
    <property type="entry name" value="L31"/>
    <property type="match status" value="1"/>
</dbReference>
<dbReference type="NCBIfam" id="NF002462">
    <property type="entry name" value="PRK01678.1"/>
    <property type="match status" value="1"/>
</dbReference>
<dbReference type="PANTHER" id="PTHR33280">
    <property type="entry name" value="50S RIBOSOMAL PROTEIN L31, CHLOROPLASTIC"/>
    <property type="match status" value="1"/>
</dbReference>
<dbReference type="PANTHER" id="PTHR33280:SF1">
    <property type="entry name" value="LARGE RIBOSOMAL SUBUNIT PROTEIN BL31C"/>
    <property type="match status" value="1"/>
</dbReference>
<dbReference type="Pfam" id="PF01197">
    <property type="entry name" value="Ribosomal_L31"/>
    <property type="match status" value="1"/>
</dbReference>
<dbReference type="PRINTS" id="PR01249">
    <property type="entry name" value="RIBOSOMALL31"/>
</dbReference>
<dbReference type="SUPFAM" id="SSF143800">
    <property type="entry name" value="L28p-like"/>
    <property type="match status" value="1"/>
</dbReference>
<dbReference type="PROSITE" id="PS01143">
    <property type="entry name" value="RIBOSOMAL_L31"/>
    <property type="match status" value="1"/>
</dbReference>
<evidence type="ECO:0000255" key="1">
    <source>
        <dbReference type="HAMAP-Rule" id="MF_00502"/>
    </source>
</evidence>
<evidence type="ECO:0000305" key="2"/>
<keyword id="KW-1185">Reference proteome</keyword>
<keyword id="KW-0687">Ribonucleoprotein</keyword>
<keyword id="KW-0689">Ribosomal protein</keyword>
<name>RL31B_MICLC</name>
<gene>
    <name evidence="1" type="primary">rpmE2</name>
    <name type="ordered locus">Mlut_11640</name>
</gene>
<sequence>MKSEIHPDYHYVIFNDLASGEKILTRTTANSDKTAEWTDGNTYPVIDVEISAASHPFYTGKQRIMDTAGRVERFNARFKGFGGKK</sequence>
<feature type="chain" id="PRO_1000206533" description="Large ribosomal subunit protein bL31B">
    <location>
        <begin position="1"/>
        <end position="85"/>
    </location>
</feature>
<organism>
    <name type="scientific">Micrococcus luteus (strain ATCC 4698 / DSM 20030 / JCM 1464 / CCM 169 / CCUG 5858 / IAM 1056 / NBRC 3333 / NCIMB 9278 / NCTC 2665 / VKM Ac-2230)</name>
    <name type="common">Micrococcus lysodeikticus</name>
    <dbReference type="NCBI Taxonomy" id="465515"/>
    <lineage>
        <taxon>Bacteria</taxon>
        <taxon>Bacillati</taxon>
        <taxon>Actinomycetota</taxon>
        <taxon>Actinomycetes</taxon>
        <taxon>Micrococcales</taxon>
        <taxon>Micrococcaceae</taxon>
        <taxon>Micrococcus</taxon>
    </lineage>
</organism>